<organism>
    <name type="scientific">Bacillus subtilis (strain 168)</name>
    <dbReference type="NCBI Taxonomy" id="224308"/>
    <lineage>
        <taxon>Bacteria</taxon>
        <taxon>Bacillati</taxon>
        <taxon>Bacillota</taxon>
        <taxon>Bacilli</taxon>
        <taxon>Bacillales</taxon>
        <taxon>Bacillaceae</taxon>
        <taxon>Bacillus</taxon>
    </lineage>
</organism>
<accession>O31564</accession>
<accession>Q79EW5</accession>
<keyword id="KW-0238">DNA-binding</keyword>
<keyword id="KW-1185">Reference proteome</keyword>
<keyword id="KW-0804">Transcription</keyword>
<keyword id="KW-0805">Transcription regulation</keyword>
<sequence>MEYNLHDTTVLNENILSSEEREIWVLYMKVLTSAGLGDVSEWMKLDMSMPQMKVLMLLNNHGTLKVSDIAEKMGASLSNTTGLLDRLEKSGFVKRSHSEEDRRSVVVQLTENAKKIFRGLYEKGHLKLKRSLELLSPEEKQAVYEGLSILSRALENAKKE</sequence>
<protein>
    <recommendedName>
        <fullName>Uncharacterized HTH-type transcriptional regulator YfiV</fullName>
    </recommendedName>
</protein>
<feature type="chain" id="PRO_0000360528" description="Uncharacterized HTH-type transcriptional regulator YfiV">
    <location>
        <begin position="1"/>
        <end position="160"/>
    </location>
</feature>
<feature type="domain" description="HTH marR-type" evidence="1">
    <location>
        <begin position="20"/>
        <end position="152"/>
    </location>
</feature>
<feature type="DNA-binding region" description="H-T-H motif" evidence="1">
    <location>
        <begin position="66"/>
        <end position="89"/>
    </location>
</feature>
<dbReference type="EMBL" id="D85082">
    <property type="protein sequence ID" value="BAA24462.1"/>
    <property type="molecule type" value="Genomic_DNA"/>
</dbReference>
<dbReference type="EMBL" id="AL009126">
    <property type="protein sequence ID" value="CAB12670.1"/>
    <property type="molecule type" value="Genomic_DNA"/>
</dbReference>
<dbReference type="PIR" id="H69804">
    <property type="entry name" value="H69804"/>
</dbReference>
<dbReference type="RefSeq" id="NP_388722.1">
    <property type="nucleotide sequence ID" value="NC_000964.3"/>
</dbReference>
<dbReference type="RefSeq" id="WP_003244538.1">
    <property type="nucleotide sequence ID" value="NZ_OZ025638.1"/>
</dbReference>
<dbReference type="SMR" id="O31564"/>
<dbReference type="FunCoup" id="O31564">
    <property type="interactions" value="162"/>
</dbReference>
<dbReference type="STRING" id="224308.BSU08410"/>
<dbReference type="PaxDb" id="224308-BSU08410"/>
<dbReference type="EnsemblBacteria" id="CAB12670">
    <property type="protein sequence ID" value="CAB12670"/>
    <property type="gene ID" value="BSU_08410"/>
</dbReference>
<dbReference type="GeneID" id="939218"/>
<dbReference type="KEGG" id="bsu:BSU08410"/>
<dbReference type="PATRIC" id="fig|224308.179.peg.909"/>
<dbReference type="eggNOG" id="COG1846">
    <property type="taxonomic scope" value="Bacteria"/>
</dbReference>
<dbReference type="InParanoid" id="O31564"/>
<dbReference type="OrthoDB" id="327696at2"/>
<dbReference type="PhylomeDB" id="O31564"/>
<dbReference type="BioCyc" id="BSUB:BSU08410-MONOMER"/>
<dbReference type="Proteomes" id="UP000001570">
    <property type="component" value="Chromosome"/>
</dbReference>
<dbReference type="GO" id="GO:0003677">
    <property type="term" value="F:DNA binding"/>
    <property type="evidence" value="ECO:0007669"/>
    <property type="project" value="UniProtKB-KW"/>
</dbReference>
<dbReference type="GO" id="GO:0003700">
    <property type="term" value="F:DNA-binding transcription factor activity"/>
    <property type="evidence" value="ECO:0007669"/>
    <property type="project" value="InterPro"/>
</dbReference>
<dbReference type="GO" id="GO:0006355">
    <property type="term" value="P:regulation of DNA-templated transcription"/>
    <property type="evidence" value="ECO:0000318"/>
    <property type="project" value="GO_Central"/>
</dbReference>
<dbReference type="GO" id="GO:0006950">
    <property type="term" value="P:response to stress"/>
    <property type="evidence" value="ECO:0000318"/>
    <property type="project" value="GO_Central"/>
</dbReference>
<dbReference type="CDD" id="cd00090">
    <property type="entry name" value="HTH_ARSR"/>
    <property type="match status" value="1"/>
</dbReference>
<dbReference type="Gene3D" id="1.10.10.10">
    <property type="entry name" value="Winged helix-like DNA-binding domain superfamily/Winged helix DNA-binding domain"/>
    <property type="match status" value="1"/>
</dbReference>
<dbReference type="InterPro" id="IPR011991">
    <property type="entry name" value="ArsR-like_HTH"/>
</dbReference>
<dbReference type="InterPro" id="IPR000835">
    <property type="entry name" value="HTH_MarR-typ"/>
</dbReference>
<dbReference type="InterPro" id="IPR039422">
    <property type="entry name" value="MarR/SlyA-like"/>
</dbReference>
<dbReference type="InterPro" id="IPR036388">
    <property type="entry name" value="WH-like_DNA-bd_sf"/>
</dbReference>
<dbReference type="InterPro" id="IPR036390">
    <property type="entry name" value="WH_DNA-bd_sf"/>
</dbReference>
<dbReference type="PANTHER" id="PTHR33164:SF99">
    <property type="entry name" value="MARR FAMILY REGULATORY PROTEIN"/>
    <property type="match status" value="1"/>
</dbReference>
<dbReference type="PANTHER" id="PTHR33164">
    <property type="entry name" value="TRANSCRIPTIONAL REGULATOR, MARR FAMILY"/>
    <property type="match status" value="1"/>
</dbReference>
<dbReference type="Pfam" id="PF01047">
    <property type="entry name" value="MarR"/>
    <property type="match status" value="1"/>
</dbReference>
<dbReference type="PRINTS" id="PR00598">
    <property type="entry name" value="HTHMARR"/>
</dbReference>
<dbReference type="SMART" id="SM00347">
    <property type="entry name" value="HTH_MARR"/>
    <property type="match status" value="1"/>
</dbReference>
<dbReference type="SUPFAM" id="SSF46785">
    <property type="entry name" value="Winged helix' DNA-binding domain"/>
    <property type="match status" value="1"/>
</dbReference>
<dbReference type="PROSITE" id="PS50995">
    <property type="entry name" value="HTH_MARR_2"/>
    <property type="match status" value="1"/>
</dbReference>
<name>YFIV_BACSU</name>
<gene>
    <name type="primary">yfiV</name>
    <name type="ordered locus">BSU08410</name>
</gene>
<evidence type="ECO:0000255" key="1">
    <source>
        <dbReference type="PROSITE-ProRule" id="PRU00345"/>
    </source>
</evidence>
<reference key="1">
    <citation type="journal article" date="1996" name="DNA Res.">
        <title>Cloning and sequencing of a 27.8-kb nucleotide sequence of the 79 degrees-81 degrees region of the Bacillus subtilis genome containing the sspE locus.</title>
        <authorList>
            <person name="Yamamoto H."/>
            <person name="Uchiyama S."/>
            <person name="Sekiguchi J."/>
        </authorList>
    </citation>
    <scope>NUCLEOTIDE SEQUENCE [GENOMIC DNA]</scope>
</reference>
<reference key="2">
    <citation type="journal article" date="1997" name="Nature">
        <title>The complete genome sequence of the Gram-positive bacterium Bacillus subtilis.</title>
        <authorList>
            <person name="Kunst F."/>
            <person name="Ogasawara N."/>
            <person name="Moszer I."/>
            <person name="Albertini A.M."/>
            <person name="Alloni G."/>
            <person name="Azevedo V."/>
            <person name="Bertero M.G."/>
            <person name="Bessieres P."/>
            <person name="Bolotin A."/>
            <person name="Borchert S."/>
            <person name="Borriss R."/>
            <person name="Boursier L."/>
            <person name="Brans A."/>
            <person name="Braun M."/>
            <person name="Brignell S.C."/>
            <person name="Bron S."/>
            <person name="Brouillet S."/>
            <person name="Bruschi C.V."/>
            <person name="Caldwell B."/>
            <person name="Capuano V."/>
            <person name="Carter N.M."/>
            <person name="Choi S.-K."/>
            <person name="Codani J.-J."/>
            <person name="Connerton I.F."/>
            <person name="Cummings N.J."/>
            <person name="Daniel R.A."/>
            <person name="Denizot F."/>
            <person name="Devine K.M."/>
            <person name="Duesterhoeft A."/>
            <person name="Ehrlich S.D."/>
            <person name="Emmerson P.T."/>
            <person name="Entian K.-D."/>
            <person name="Errington J."/>
            <person name="Fabret C."/>
            <person name="Ferrari E."/>
            <person name="Foulger D."/>
            <person name="Fritz C."/>
            <person name="Fujita M."/>
            <person name="Fujita Y."/>
            <person name="Fuma S."/>
            <person name="Galizzi A."/>
            <person name="Galleron N."/>
            <person name="Ghim S.-Y."/>
            <person name="Glaser P."/>
            <person name="Goffeau A."/>
            <person name="Golightly E.J."/>
            <person name="Grandi G."/>
            <person name="Guiseppi G."/>
            <person name="Guy B.J."/>
            <person name="Haga K."/>
            <person name="Haiech J."/>
            <person name="Harwood C.R."/>
            <person name="Henaut A."/>
            <person name="Hilbert H."/>
            <person name="Holsappel S."/>
            <person name="Hosono S."/>
            <person name="Hullo M.-F."/>
            <person name="Itaya M."/>
            <person name="Jones L.-M."/>
            <person name="Joris B."/>
            <person name="Karamata D."/>
            <person name="Kasahara Y."/>
            <person name="Klaerr-Blanchard M."/>
            <person name="Klein C."/>
            <person name="Kobayashi Y."/>
            <person name="Koetter P."/>
            <person name="Koningstein G."/>
            <person name="Krogh S."/>
            <person name="Kumano M."/>
            <person name="Kurita K."/>
            <person name="Lapidus A."/>
            <person name="Lardinois S."/>
            <person name="Lauber J."/>
            <person name="Lazarevic V."/>
            <person name="Lee S.-M."/>
            <person name="Levine A."/>
            <person name="Liu H."/>
            <person name="Masuda S."/>
            <person name="Mauel C."/>
            <person name="Medigue C."/>
            <person name="Medina N."/>
            <person name="Mellado R.P."/>
            <person name="Mizuno M."/>
            <person name="Moestl D."/>
            <person name="Nakai S."/>
            <person name="Noback M."/>
            <person name="Noone D."/>
            <person name="O'Reilly M."/>
            <person name="Ogawa K."/>
            <person name="Ogiwara A."/>
            <person name="Oudega B."/>
            <person name="Park S.-H."/>
            <person name="Parro V."/>
            <person name="Pohl T.M."/>
            <person name="Portetelle D."/>
            <person name="Porwollik S."/>
            <person name="Prescott A.M."/>
            <person name="Presecan E."/>
            <person name="Pujic P."/>
            <person name="Purnelle B."/>
            <person name="Rapoport G."/>
            <person name="Rey M."/>
            <person name="Reynolds S."/>
            <person name="Rieger M."/>
            <person name="Rivolta C."/>
            <person name="Rocha E."/>
            <person name="Roche B."/>
            <person name="Rose M."/>
            <person name="Sadaie Y."/>
            <person name="Sato T."/>
            <person name="Scanlan E."/>
            <person name="Schleich S."/>
            <person name="Schroeter R."/>
            <person name="Scoffone F."/>
            <person name="Sekiguchi J."/>
            <person name="Sekowska A."/>
            <person name="Seror S.J."/>
            <person name="Serror P."/>
            <person name="Shin B.-S."/>
            <person name="Soldo B."/>
            <person name="Sorokin A."/>
            <person name="Tacconi E."/>
            <person name="Takagi T."/>
            <person name="Takahashi H."/>
            <person name="Takemaru K."/>
            <person name="Takeuchi M."/>
            <person name="Tamakoshi A."/>
            <person name="Tanaka T."/>
            <person name="Terpstra P."/>
            <person name="Tognoni A."/>
            <person name="Tosato V."/>
            <person name="Uchiyama S."/>
            <person name="Vandenbol M."/>
            <person name="Vannier F."/>
            <person name="Vassarotti A."/>
            <person name="Viari A."/>
            <person name="Wambutt R."/>
            <person name="Wedler E."/>
            <person name="Wedler H."/>
            <person name="Weitzenegger T."/>
            <person name="Winters P."/>
            <person name="Wipat A."/>
            <person name="Yamamoto H."/>
            <person name="Yamane K."/>
            <person name="Yasumoto K."/>
            <person name="Yata K."/>
            <person name="Yoshida K."/>
            <person name="Yoshikawa H.-F."/>
            <person name="Zumstein E."/>
            <person name="Yoshikawa H."/>
            <person name="Danchin A."/>
        </authorList>
    </citation>
    <scope>NUCLEOTIDE SEQUENCE [LARGE SCALE GENOMIC DNA]</scope>
    <source>
        <strain>168</strain>
    </source>
</reference>
<proteinExistence type="predicted"/>